<keyword id="KW-0648">Protein biosynthesis</keyword>
<keyword id="KW-1185">Reference proteome</keyword>
<keyword id="KW-0808">Transferase</keyword>
<proteinExistence type="inferred from homology"/>
<reference key="1">
    <citation type="journal article" date="2008" name="J. Bacteriol.">
        <title>The complete genome sequence of Actinobacillus pleuropneumoniae L20 (serotype 5b).</title>
        <authorList>
            <person name="Foote S.J."/>
            <person name="Bosse J.T."/>
            <person name="Bouevitch A.B."/>
            <person name="Langford P.R."/>
            <person name="Young N.M."/>
            <person name="Nash J.H.E."/>
        </authorList>
    </citation>
    <scope>NUCLEOTIDE SEQUENCE [LARGE SCALE GENOMIC DNA]</scope>
    <source>
        <strain>L20</strain>
    </source>
</reference>
<feature type="chain" id="PRO_1000020011" description="Methionyl-tRNA formyltransferase">
    <location>
        <begin position="1"/>
        <end position="316"/>
    </location>
</feature>
<feature type="binding site" evidence="1">
    <location>
        <begin position="112"/>
        <end position="115"/>
    </location>
    <ligand>
        <name>(6S)-5,6,7,8-tetrahydrofolate</name>
        <dbReference type="ChEBI" id="CHEBI:57453"/>
    </ligand>
</feature>
<accession>A3N2N5</accession>
<sequence length="316" mass="34435">MSKLNIIFAGTPDFAAQHLQALLDSEHNVIAVYTQPDKPAGRGKKLQASPVKQLAEQHNIPVYQPKSLRKEDAQAELKALNADVMVVVAYGLILPEAVLNAPKYGCLNVHGSLLPRWRGAAPIQRSIWAGDQETGVTIMQMDIGLDTGDMLHKVTTPIAADETSASLYAKLAELAPPALLEVLNGLESQAFKAEKQDDALSNYAEKLSKEEAKLDWNLTACQLERNIRAFNPWPISFLTLEVDGVEQSVKVYQANVLPHQAKAAGTVLQADKNGIQIATQEGVLNITQLQPSGKKPMSVQDFLNGRADWFAVGKQL</sequence>
<dbReference type="EC" id="2.1.2.9" evidence="1"/>
<dbReference type="EMBL" id="CP000569">
    <property type="protein sequence ID" value="ABN74671.1"/>
    <property type="molecule type" value="Genomic_DNA"/>
</dbReference>
<dbReference type="RefSeq" id="WP_005605537.1">
    <property type="nucleotide sequence ID" value="NC_009053.1"/>
</dbReference>
<dbReference type="SMR" id="A3N2N5"/>
<dbReference type="STRING" id="416269.APL_1587"/>
<dbReference type="EnsemblBacteria" id="ABN74671">
    <property type="protein sequence ID" value="ABN74671"/>
    <property type="gene ID" value="APL_1587"/>
</dbReference>
<dbReference type="KEGG" id="apl:APL_1587"/>
<dbReference type="eggNOG" id="COG0223">
    <property type="taxonomic scope" value="Bacteria"/>
</dbReference>
<dbReference type="HOGENOM" id="CLU_033347_1_2_6"/>
<dbReference type="Proteomes" id="UP000001432">
    <property type="component" value="Chromosome"/>
</dbReference>
<dbReference type="GO" id="GO:0005829">
    <property type="term" value="C:cytosol"/>
    <property type="evidence" value="ECO:0007669"/>
    <property type="project" value="TreeGrafter"/>
</dbReference>
<dbReference type="GO" id="GO:0004479">
    <property type="term" value="F:methionyl-tRNA formyltransferase activity"/>
    <property type="evidence" value="ECO:0007669"/>
    <property type="project" value="UniProtKB-UniRule"/>
</dbReference>
<dbReference type="CDD" id="cd08646">
    <property type="entry name" value="FMT_core_Met-tRNA-FMT_N"/>
    <property type="match status" value="1"/>
</dbReference>
<dbReference type="CDD" id="cd08704">
    <property type="entry name" value="Met_tRNA_FMT_C"/>
    <property type="match status" value="1"/>
</dbReference>
<dbReference type="FunFam" id="3.40.50.170:FF:000003">
    <property type="entry name" value="Methionyl-tRNA formyltransferase"/>
    <property type="match status" value="1"/>
</dbReference>
<dbReference type="Gene3D" id="3.10.25.10">
    <property type="entry name" value="Formyl transferase, C-terminal domain"/>
    <property type="match status" value="1"/>
</dbReference>
<dbReference type="Gene3D" id="3.40.50.170">
    <property type="entry name" value="Formyl transferase, N-terminal domain"/>
    <property type="match status" value="1"/>
</dbReference>
<dbReference type="HAMAP" id="MF_00182">
    <property type="entry name" value="Formyl_trans"/>
    <property type="match status" value="1"/>
</dbReference>
<dbReference type="InterPro" id="IPR005794">
    <property type="entry name" value="Fmt"/>
</dbReference>
<dbReference type="InterPro" id="IPR005793">
    <property type="entry name" value="Formyl_trans_C"/>
</dbReference>
<dbReference type="InterPro" id="IPR037022">
    <property type="entry name" value="Formyl_trans_C_sf"/>
</dbReference>
<dbReference type="InterPro" id="IPR002376">
    <property type="entry name" value="Formyl_transf_N"/>
</dbReference>
<dbReference type="InterPro" id="IPR036477">
    <property type="entry name" value="Formyl_transf_N_sf"/>
</dbReference>
<dbReference type="InterPro" id="IPR011034">
    <property type="entry name" value="Formyl_transferase-like_C_sf"/>
</dbReference>
<dbReference type="InterPro" id="IPR001555">
    <property type="entry name" value="GART_AS"/>
</dbReference>
<dbReference type="InterPro" id="IPR044135">
    <property type="entry name" value="Met-tRNA-FMT_C"/>
</dbReference>
<dbReference type="InterPro" id="IPR041711">
    <property type="entry name" value="Met-tRNA-FMT_N"/>
</dbReference>
<dbReference type="NCBIfam" id="TIGR00460">
    <property type="entry name" value="fmt"/>
    <property type="match status" value="1"/>
</dbReference>
<dbReference type="PANTHER" id="PTHR11138">
    <property type="entry name" value="METHIONYL-TRNA FORMYLTRANSFERASE"/>
    <property type="match status" value="1"/>
</dbReference>
<dbReference type="PANTHER" id="PTHR11138:SF5">
    <property type="entry name" value="METHIONYL-TRNA FORMYLTRANSFERASE, MITOCHONDRIAL"/>
    <property type="match status" value="1"/>
</dbReference>
<dbReference type="Pfam" id="PF02911">
    <property type="entry name" value="Formyl_trans_C"/>
    <property type="match status" value="1"/>
</dbReference>
<dbReference type="Pfam" id="PF00551">
    <property type="entry name" value="Formyl_trans_N"/>
    <property type="match status" value="1"/>
</dbReference>
<dbReference type="SUPFAM" id="SSF50486">
    <property type="entry name" value="FMT C-terminal domain-like"/>
    <property type="match status" value="1"/>
</dbReference>
<dbReference type="SUPFAM" id="SSF53328">
    <property type="entry name" value="Formyltransferase"/>
    <property type="match status" value="1"/>
</dbReference>
<dbReference type="PROSITE" id="PS00373">
    <property type="entry name" value="GART"/>
    <property type="match status" value="1"/>
</dbReference>
<comment type="function">
    <text evidence="1">Attaches a formyl group to the free amino group of methionyl-tRNA(fMet). The formyl group appears to play a dual role in the initiator identity of N-formylmethionyl-tRNA by promoting its recognition by IF2 and preventing the misappropriation of this tRNA by the elongation apparatus.</text>
</comment>
<comment type="catalytic activity">
    <reaction evidence="1">
        <text>L-methionyl-tRNA(fMet) + (6R)-10-formyltetrahydrofolate = N-formyl-L-methionyl-tRNA(fMet) + (6S)-5,6,7,8-tetrahydrofolate + H(+)</text>
        <dbReference type="Rhea" id="RHEA:24380"/>
        <dbReference type="Rhea" id="RHEA-COMP:9952"/>
        <dbReference type="Rhea" id="RHEA-COMP:9953"/>
        <dbReference type="ChEBI" id="CHEBI:15378"/>
        <dbReference type="ChEBI" id="CHEBI:57453"/>
        <dbReference type="ChEBI" id="CHEBI:78530"/>
        <dbReference type="ChEBI" id="CHEBI:78844"/>
        <dbReference type="ChEBI" id="CHEBI:195366"/>
        <dbReference type="EC" id="2.1.2.9"/>
    </reaction>
</comment>
<comment type="similarity">
    <text evidence="1">Belongs to the Fmt family.</text>
</comment>
<organism>
    <name type="scientific">Actinobacillus pleuropneumoniae serotype 5b (strain L20)</name>
    <dbReference type="NCBI Taxonomy" id="416269"/>
    <lineage>
        <taxon>Bacteria</taxon>
        <taxon>Pseudomonadati</taxon>
        <taxon>Pseudomonadota</taxon>
        <taxon>Gammaproteobacteria</taxon>
        <taxon>Pasteurellales</taxon>
        <taxon>Pasteurellaceae</taxon>
        <taxon>Actinobacillus</taxon>
    </lineage>
</organism>
<protein>
    <recommendedName>
        <fullName evidence="1">Methionyl-tRNA formyltransferase</fullName>
        <ecNumber evidence="1">2.1.2.9</ecNumber>
    </recommendedName>
</protein>
<evidence type="ECO:0000255" key="1">
    <source>
        <dbReference type="HAMAP-Rule" id="MF_00182"/>
    </source>
</evidence>
<name>FMT_ACTP2</name>
<gene>
    <name evidence="1" type="primary">fmt</name>
    <name type="ordered locus">APL_1587</name>
</gene>